<proteinExistence type="inferred from homology"/>
<gene>
    <name type="primary">sru-26</name>
    <name type="ORF">T04A11.12</name>
</gene>
<sequence>MFTLPPVLNSSYVGIHGNSTFINFEFSFYTLPMLFLLVPILYIPITIIIILRILVKLYYAFRDRNNNVYLLSAISISQCMCLLFFLADFLYLRLPTSGLLTSWCASIEPNRFITILTIFTYHINYSTMIFPFLVSIMRLILIISPKNHKKFNGQLLRFSIPFICVYPIIFTFFMFPAIGYCSYAAYPFPFGAIIFRIERTFFGLVNNFSLLFNTLFWMTCCIITNFILLLLLIKSRCLLNAQTRSMHSYKVEVSLSLTTFSMIFSYLSNAMIVFLLLELHIVGHYASPIW</sequence>
<dbReference type="EMBL" id="Z83123">
    <property type="protein sequence ID" value="CAD45601.2"/>
    <property type="molecule type" value="Genomic_DNA"/>
</dbReference>
<dbReference type="RefSeq" id="NP_741493.2">
    <property type="nucleotide sequence ID" value="NM_171421.3"/>
</dbReference>
<dbReference type="SMR" id="P83502"/>
<dbReference type="PaxDb" id="6239-T04A11.12b"/>
<dbReference type="EnsemblMetazoa" id="T04A11.12a.1">
    <property type="protein sequence ID" value="T04A11.12a.1"/>
    <property type="gene ID" value="WBGene00005689"/>
</dbReference>
<dbReference type="GeneID" id="266905"/>
<dbReference type="KEGG" id="cel:CELE_T04A11.12"/>
<dbReference type="UCSC" id="T04A11.12">
    <property type="organism name" value="c. elegans"/>
</dbReference>
<dbReference type="AGR" id="WB:WBGene00005689"/>
<dbReference type="CTD" id="266905"/>
<dbReference type="WormBase" id="T04A11.12a">
    <property type="protein sequence ID" value="CE43566"/>
    <property type="gene ID" value="WBGene00005689"/>
    <property type="gene designation" value="sru-26"/>
</dbReference>
<dbReference type="eggNOG" id="ENOG502TJE7">
    <property type="taxonomic scope" value="Eukaryota"/>
</dbReference>
<dbReference type="GeneTree" id="ENSGT00940000154747"/>
<dbReference type="InParanoid" id="P83502"/>
<dbReference type="PhylomeDB" id="P83502"/>
<dbReference type="PRO" id="PR:P83502"/>
<dbReference type="Proteomes" id="UP000001940">
    <property type="component" value="Chromosome IV"/>
</dbReference>
<dbReference type="ExpressionAtlas" id="P83502">
    <property type="expression patterns" value="baseline"/>
</dbReference>
<dbReference type="GO" id="GO:0016020">
    <property type="term" value="C:membrane"/>
    <property type="evidence" value="ECO:0007669"/>
    <property type="project" value="UniProtKB-SubCell"/>
</dbReference>
<dbReference type="InterPro" id="IPR003839">
    <property type="entry name" value="7TM_GPCR_serpentine_rcpt_Sru"/>
</dbReference>
<dbReference type="PANTHER" id="PTHR46045:SF16">
    <property type="entry name" value="SERPENTINE RECEPTOR CLASS U-26"/>
    <property type="match status" value="1"/>
</dbReference>
<dbReference type="PANTHER" id="PTHR46045">
    <property type="entry name" value="SERPENTINE RECEPTOR, CLASS U-RELATED"/>
    <property type="match status" value="1"/>
</dbReference>
<dbReference type="Pfam" id="PF10322">
    <property type="entry name" value="7TM_GPCR_Sru"/>
    <property type="match status" value="1"/>
</dbReference>
<protein>
    <recommendedName>
        <fullName>Serpentine receptor class U-26</fullName>
        <shortName>Protein sru-26</shortName>
    </recommendedName>
</protein>
<keyword id="KW-0472">Membrane</keyword>
<keyword id="KW-1185">Reference proteome</keyword>
<keyword id="KW-0812">Transmembrane</keyword>
<keyword id="KW-1133">Transmembrane helix</keyword>
<comment type="subcellular location">
    <subcellularLocation>
        <location evidence="2">Membrane</location>
        <topology evidence="2">Multi-pass membrane protein</topology>
    </subcellularLocation>
</comment>
<comment type="similarity">
    <text evidence="2">Belongs to the nematode receptor-like protein sru family.</text>
</comment>
<reference key="1">
    <citation type="journal article" date="1998" name="Science">
        <title>Genome sequence of the nematode C. elegans: a platform for investigating biology.</title>
        <authorList>
            <consortium name="The C. elegans sequencing consortium"/>
        </authorList>
    </citation>
    <scope>NUCLEOTIDE SEQUENCE [LARGE SCALE GENOMIC DNA]</scope>
    <source>
        <strain>Bristol N2</strain>
    </source>
</reference>
<name>SRU26_CAEEL</name>
<evidence type="ECO:0000255" key="1"/>
<evidence type="ECO:0000305" key="2"/>
<feature type="chain" id="PRO_0000065444" description="Serpentine receptor class U-26">
    <location>
        <begin position="1"/>
        <end position="290"/>
    </location>
</feature>
<feature type="transmembrane region" description="Helical" evidence="1">
    <location>
        <begin position="31"/>
        <end position="51"/>
    </location>
</feature>
<feature type="transmembrane region" description="Helical" evidence="1">
    <location>
        <begin position="70"/>
        <end position="90"/>
    </location>
</feature>
<feature type="transmembrane region" description="Helical" evidence="1">
    <location>
        <begin position="112"/>
        <end position="134"/>
    </location>
</feature>
<feature type="transmembrane region" description="Helical" evidence="1">
    <location>
        <begin position="158"/>
        <end position="178"/>
    </location>
</feature>
<feature type="transmembrane region" description="Helical" evidence="1">
    <location>
        <begin position="185"/>
        <end position="205"/>
    </location>
</feature>
<feature type="transmembrane region" description="Helical" evidence="1">
    <location>
        <begin position="213"/>
        <end position="233"/>
    </location>
</feature>
<feature type="transmembrane region" description="Helical" evidence="1">
    <location>
        <begin position="262"/>
        <end position="282"/>
    </location>
</feature>
<organism>
    <name type="scientific">Caenorhabditis elegans</name>
    <dbReference type="NCBI Taxonomy" id="6239"/>
    <lineage>
        <taxon>Eukaryota</taxon>
        <taxon>Metazoa</taxon>
        <taxon>Ecdysozoa</taxon>
        <taxon>Nematoda</taxon>
        <taxon>Chromadorea</taxon>
        <taxon>Rhabditida</taxon>
        <taxon>Rhabditina</taxon>
        <taxon>Rhabditomorpha</taxon>
        <taxon>Rhabditoidea</taxon>
        <taxon>Rhabditidae</taxon>
        <taxon>Peloderinae</taxon>
        <taxon>Caenorhabditis</taxon>
    </lineage>
</organism>
<accession>P83502</accession>